<organism>
    <name type="scientific">Human respiratory syncytial virus B (strain 18537)</name>
    <dbReference type="NCBI Taxonomy" id="11251"/>
    <lineage>
        <taxon>Viruses</taxon>
        <taxon>Riboviria</taxon>
        <taxon>Orthornavirae</taxon>
        <taxon>Negarnaviricota</taxon>
        <taxon>Haploviricotina</taxon>
        <taxon>Monjiviricetes</taxon>
        <taxon>Mononegavirales</taxon>
        <taxon>Pneumoviridae</taxon>
        <taxon>Orthopneumovirus</taxon>
        <taxon>Orthopneumovirus hominis</taxon>
    </lineage>
</organism>
<gene>
    <name type="primary">1C</name>
    <name type="synonym">NS1</name>
</gene>
<feature type="chain" id="PRO_0000142782" description="Non-structural protein 1">
    <location>
        <begin position="1"/>
        <end position="139"/>
    </location>
</feature>
<feature type="short sequence motif" description="DLNP; interaction with MAP1B" evidence="1">
    <location>
        <begin position="136"/>
        <end position="139"/>
    </location>
</feature>
<evidence type="ECO:0000250" key="1">
    <source>
        <dbReference type="UniProtKB" id="P0DOE9"/>
    </source>
</evidence>
<evidence type="ECO:0000305" key="2"/>
<organismHost>
    <name type="scientific">Homo sapiens</name>
    <name type="common">Human</name>
    <dbReference type="NCBI Taxonomy" id="9606"/>
</organismHost>
<name>NS1_HRSV1</name>
<protein>
    <recommendedName>
        <fullName>Non-structural protein 1</fullName>
    </recommendedName>
    <alternativeName>
        <fullName>Non-structural protein 1C</fullName>
    </alternativeName>
</protein>
<proteinExistence type="inferred from homology"/>
<comment type="function">
    <text evidence="1">Plays a major role in antagonizing the type I IFN-mediated antiviral response by degrading or inhibiting multiple cellular factors required for either IFN induction or response pathways. Acts cooperatively with NS2 to repress activation and nuclear translocation of host IFN-regulatory factor IRF3. Also disrupts the association of IRF3 with CREBBP. Interacts with host mitochondrial-associated membrane (MAM) MAVS and prevents the interaction with RIGI. Interacts with TRIM25 to suppress TRIM25-mediated RIGI ubiquitination and thereby RIGI-MAVS interaction. Together with NS2, participates in the proteasomal degradation of host STAT2, IRF3, IRF7, TBK1 and RIGI through a NS-degradasome involving CUL2 and Elongin-C. The degradasome requires an intact mitochondrial MAVS. Decreases the levels of host TRAF3 and IKBKE/IKK-epsilon. As functions other than disruptions of the type I IFN-mediated antiviral signaling pathways, induces host SOCS1 and SOCS3 expression. Suppresses premature apoptosis by an NF-kappa-B-dependent, interferon-independent mechanism and thus facilitates virus growth. Additionally, NS1 may serve some inhibitory role in viral transcription and RNA replication. Suppresses proliferation and activation of host CD103+ CD8+ cytotoxic T-lymphocytes and Th17 helper T-lymphocytes.</text>
</comment>
<comment type="subunit">
    <text evidence="1">Monomer. Homomultimer. Heteromultimer with NS2. Interacts with the matrix protein M. Interacts with host ELOC and CUL2; this interaction allows NS1 to form an active E3 ligase with ELOC and CUL2. Interacts with host IRF3; this interaction leads to the disrupted association of IRF3 with CREBBP and thus reduced binding of IRF3 to the IFN-beta promoter. Interacts with host MAVS; this interaction prevents MAVS binding to RIGI and inhibits signaling pathway leading to interferon production. Interacts with host MAP1B/microtubule-associated protein 1B. Interacts with host TRIM25 (via SPRY domain); this interaction suppresses RIGI ubiquitination and results in decreased interaction between RIGI and MAVS.</text>
</comment>
<comment type="subcellular location">
    <subcellularLocation>
        <location evidence="1">Host cytoplasm</location>
    </subcellularLocation>
    <subcellularLocation>
        <location evidence="1">Host mitochondrion</location>
    </subcellularLocation>
    <subcellularLocation>
        <location evidence="1">Host nucleus</location>
    </subcellularLocation>
    <text evidence="1">Most NS1 resides in the mitochondria as a heteromer with NS2.</text>
</comment>
<comment type="domain">
    <text evidence="1">N-terminus is important for IKBKE/IKK-epsilon reduction. The DNLP motif has IFN suppressive functions like binding to host MAP1B.</text>
</comment>
<comment type="similarity">
    <text evidence="2">Belongs to the pneumovirus non-structural protein 1 family.</text>
</comment>
<accession>P24568</accession>
<dbReference type="EMBL" id="D00736">
    <property type="protein sequence ID" value="BAA00635.1"/>
    <property type="molecule type" value="Genomic_RNA"/>
</dbReference>
<dbReference type="PIR" id="A32063">
    <property type="entry name" value="MNNZ18"/>
</dbReference>
<dbReference type="SMR" id="P24568"/>
<dbReference type="GO" id="GO:0033650">
    <property type="term" value="C:host cell mitochondrion"/>
    <property type="evidence" value="ECO:0007669"/>
    <property type="project" value="UniProtKB-SubCell"/>
</dbReference>
<dbReference type="GO" id="GO:0042025">
    <property type="term" value="C:host cell nucleus"/>
    <property type="evidence" value="ECO:0007669"/>
    <property type="project" value="UniProtKB-SubCell"/>
</dbReference>
<dbReference type="GO" id="GO:0052150">
    <property type="term" value="P:symbiont-mediated perturbation of host apoptosis"/>
    <property type="evidence" value="ECO:0007669"/>
    <property type="project" value="UniProtKB-KW"/>
</dbReference>
<dbReference type="GO" id="GO:0039504">
    <property type="term" value="P:symbiont-mediated suppression of host adaptive immune response"/>
    <property type="evidence" value="ECO:0007669"/>
    <property type="project" value="UniProtKB-KW"/>
</dbReference>
<dbReference type="GO" id="GO:0039548">
    <property type="term" value="P:symbiont-mediated suppression of host cytoplasmic pattern recognition receptor signaling pathway via inhibition of IRF3 activity"/>
    <property type="evidence" value="ECO:0007669"/>
    <property type="project" value="UniProtKB-KW"/>
</dbReference>
<dbReference type="GO" id="GO:0039557">
    <property type="term" value="P:symbiont-mediated suppression of host cytoplasmic pattern recognition receptor signaling pathway via inhibition of IRF7 activity"/>
    <property type="evidence" value="ECO:0007669"/>
    <property type="project" value="UniProtKB-KW"/>
</dbReference>
<dbReference type="GO" id="GO:0039545">
    <property type="term" value="P:symbiont-mediated suppression of host cytoplasmic pattern recognition receptor signaling pathway via inhibition of MAVS activity"/>
    <property type="evidence" value="ECO:0007669"/>
    <property type="project" value="UniProtKB-KW"/>
</dbReference>
<dbReference type="GO" id="GO:0039540">
    <property type="term" value="P:symbiont-mediated suppression of host cytoplasmic pattern recognition receptor signaling pathway via inhibition of RIG-I activity"/>
    <property type="evidence" value="ECO:0007669"/>
    <property type="project" value="UniProtKB-KW"/>
</dbReference>
<dbReference type="GO" id="GO:0039723">
    <property type="term" value="P:symbiont-mediated suppression of host cytoplasmic pattern recognition receptor signaling pathway via inhibition of TBK1 activity"/>
    <property type="evidence" value="ECO:0007669"/>
    <property type="project" value="UniProtKB-KW"/>
</dbReference>
<dbReference type="GO" id="GO:0039564">
    <property type="term" value="P:symbiont-mediated suppression of host JAK-STAT cascade via inhibition of STAT2 activity"/>
    <property type="evidence" value="ECO:0007669"/>
    <property type="project" value="UniProtKB-KW"/>
</dbReference>
<dbReference type="GO" id="GO:0039722">
    <property type="term" value="P:symbiont-mediated suppression of host toll-like receptor signaling pathway"/>
    <property type="evidence" value="ECO:0007669"/>
    <property type="project" value="UniProtKB-KW"/>
</dbReference>
<dbReference type="GO" id="GO:0039502">
    <property type="term" value="P:symbiont-mediated suppression of host type I interferon-mediated signaling pathway"/>
    <property type="evidence" value="ECO:0007669"/>
    <property type="project" value="UniProtKB-KW"/>
</dbReference>
<dbReference type="InterPro" id="IPR005099">
    <property type="entry name" value="Pneumo_NS1"/>
</dbReference>
<dbReference type="Pfam" id="PF03438">
    <property type="entry name" value="Pneumo_NS1"/>
    <property type="match status" value="1"/>
</dbReference>
<reference key="1">
    <citation type="journal article" date="1989" name="J. Gen. Virol.">
        <title>The 1B (NS2), 1C (NS1) and N proteins of human respiratory syncytial virus (RSV) of antigenic subgroups A and B: sequence conservation and divergence within RSV genomic RNA.</title>
        <authorList>
            <person name="Johnson P.R."/>
            <person name="Collins P.L."/>
        </authorList>
    </citation>
    <scope>NUCLEOTIDE SEQUENCE [GENOMIC RNA]</scope>
</reference>
<reference key="2">
    <citation type="journal article" date="2019" name="PLoS Pathog.">
        <title>Respiratory syncytial virus nonstructural proteins 1 and 2: Exceptional disrupters of innate immune responses.</title>
        <authorList>
            <person name="Sedeyn K."/>
            <person name="Schepens B."/>
            <person name="Saelens X."/>
        </authorList>
    </citation>
    <scope>REVIEW</scope>
</reference>
<reference key="3">
    <citation type="journal article" date="2020" name="Front. Cell. Infect. Microbiol.">
        <title>Respiratory Syncytial Virus's Non-structural Proteins: Masters of Interference.</title>
        <authorList>
            <person name="Thornhill E.M."/>
            <person name="Verhoeven D."/>
        </authorList>
    </citation>
    <scope>REVIEW</scope>
</reference>
<keyword id="KW-1035">Host cytoplasm</keyword>
<keyword id="KW-1045">Host mitochondrion</keyword>
<keyword id="KW-1048">Host nucleus</keyword>
<keyword id="KW-0945">Host-virus interaction</keyword>
<keyword id="KW-1080">Inhibition of host adaptive immune response by virus</keyword>
<keyword id="KW-1090">Inhibition of host innate immune response by virus</keyword>
<keyword id="KW-1114">Inhibition of host interferon signaling pathway by virus</keyword>
<keyword id="KW-1092">Inhibition of host IRF3 by virus</keyword>
<keyword id="KW-1093">Inhibition of host IRF7 by virus</keyword>
<keyword id="KW-1097">Inhibition of host MAVS by virus</keyword>
<keyword id="KW-1088">Inhibition of host RIG-I by virus</keyword>
<keyword id="KW-1113">Inhibition of host RLR pathway by virus</keyword>
<keyword id="KW-1106">Inhibition of host STAT2 by virus</keyword>
<keyword id="KW-1223">Inhibition of host TBK1 by virus</keyword>
<keyword id="KW-1225">Inhibition of host TLR pathway by virus</keyword>
<keyword id="KW-0922">Interferon antiviral system evasion</keyword>
<keyword id="KW-1119">Modulation of host cell apoptosis by virus</keyword>
<keyword id="KW-0899">Viral immunoevasion</keyword>
<sequence>MGCNSLSMIKVRLQNLFDNDEVALLKITCYTDKLILLTNALAKAVIHTIKLNGIVFIHVITSSEVCPDNNIVVKSNFTTMPILQNGGYIWELIELTHCSQSNGLMVDNCEIKFSKRLSDSVMTNYMNQISDLLGLDLNS</sequence>